<name>DAZ4_HUMAN</name>
<accession>Q86SG3</accession>
<accession>Q9NR88</accession>
<accession>Q9NR89</accession>
<keyword id="KW-0025">Alternative splicing</keyword>
<keyword id="KW-0963">Cytoplasm</keyword>
<keyword id="KW-0217">Developmental protein</keyword>
<keyword id="KW-0221">Differentiation</keyword>
<keyword id="KW-0539">Nucleus</keyword>
<keyword id="KW-1185">Reference proteome</keyword>
<keyword id="KW-0677">Repeat</keyword>
<keyword id="KW-0694">RNA-binding</keyword>
<keyword id="KW-0744">Spermatogenesis</keyword>
<feature type="chain" id="PRO_0000081557" description="Deleted in azoospermia protein 4">
    <location>
        <begin position="1"/>
        <end position="579"/>
    </location>
</feature>
<feature type="domain" description="RRM 1" evidence="1">
    <location>
        <begin position="40"/>
        <end position="115"/>
    </location>
</feature>
<feature type="domain" description="RRM 2" evidence="1">
    <location>
        <begin position="205"/>
        <end position="280"/>
    </location>
</feature>
<feature type="domain" description="DAZ 1" evidence="2">
    <location>
        <begin position="332"/>
        <end position="355"/>
    </location>
</feature>
<feature type="domain" description="DAZ 2" evidence="2">
    <location>
        <begin position="356"/>
        <end position="379"/>
    </location>
</feature>
<feature type="domain" description="DAZ 3" evidence="2">
    <location>
        <begin position="380"/>
        <end position="403"/>
    </location>
</feature>
<feature type="domain" description="DAZ 4" evidence="2">
    <location>
        <begin position="404"/>
        <end position="427"/>
    </location>
</feature>
<feature type="domain" description="DAZ 5" evidence="2">
    <location>
        <begin position="428"/>
        <end position="451"/>
    </location>
</feature>
<feature type="domain" description="DAZ 6" evidence="2">
    <location>
        <begin position="452"/>
        <end position="475"/>
    </location>
</feature>
<feature type="domain" description="DAZ 7" evidence="2">
    <location>
        <begin position="476"/>
        <end position="499"/>
    </location>
</feature>
<feature type="domain" description="DAZ 8" evidence="2">
    <location>
        <begin position="500"/>
        <end position="523"/>
    </location>
</feature>
<feature type="domain" description="DAZ 9" evidence="2">
    <location>
        <begin position="524"/>
        <end position="547"/>
    </location>
</feature>
<feature type="region of interest" description="Disordered" evidence="3">
    <location>
        <begin position="1"/>
        <end position="27"/>
    </location>
</feature>
<feature type="region of interest" description="Disordered" evidence="3">
    <location>
        <begin position="163"/>
        <end position="192"/>
    </location>
</feature>
<feature type="compositionally biased region" description="Polar residues" evidence="3">
    <location>
        <begin position="1"/>
        <end position="10"/>
    </location>
</feature>
<feature type="compositionally biased region" description="Low complexity" evidence="3">
    <location>
        <begin position="11"/>
        <end position="27"/>
    </location>
</feature>
<feature type="compositionally biased region" description="Polar residues" evidence="3">
    <location>
        <begin position="163"/>
        <end position="175"/>
    </location>
</feature>
<feature type="compositionally biased region" description="Low complexity" evidence="3">
    <location>
        <begin position="176"/>
        <end position="192"/>
    </location>
</feature>
<feature type="splice variant" id="VSP_009454" description="In isoform 2." evidence="15">
    <location>
        <begin position="1"/>
        <end position="165"/>
    </location>
</feature>
<feature type="splice variant" id="VSP_009455" description="In isoform 2." evidence="15">
    <original>Q</original>
    <variation>M</variation>
    <location>
        <position position="166"/>
    </location>
</feature>
<feature type="splice variant" id="VSP_009456" description="In isoform 2." evidence="15">
    <location>
        <begin position="486"/>
        <end position="509"/>
    </location>
</feature>
<feature type="sequence conflict" description="In Ref. 1; AAF91332." evidence="16" ref="1">
    <original>T</original>
    <variation>S</variation>
    <location>
        <position position="238"/>
    </location>
</feature>
<dbReference type="EMBL" id="AF248482">
    <property type="protein sequence ID" value="AAF91331.1"/>
    <property type="molecule type" value="mRNA"/>
</dbReference>
<dbReference type="EMBL" id="AF248483">
    <property type="protein sequence ID" value="AAF91332.1"/>
    <property type="molecule type" value="mRNA"/>
</dbReference>
<dbReference type="EMBL" id="AC006338">
    <property type="status" value="NOT_ANNOTATED_CDS"/>
    <property type="molecule type" value="Genomic_DNA"/>
</dbReference>
<dbReference type="EMBL" id="BC047480">
    <property type="protein sequence ID" value="AAH47480.1"/>
    <property type="molecule type" value="mRNA"/>
</dbReference>
<dbReference type="EMBL" id="BC047617">
    <property type="protein sequence ID" value="AAH47617.1"/>
    <property type="molecule type" value="mRNA"/>
</dbReference>
<dbReference type="CCDS" id="CCDS55557.1">
    <molecule id="Q86SG3-2"/>
</dbReference>
<dbReference type="RefSeq" id="NP_001005375.1">
    <molecule id="Q86SG3-1"/>
    <property type="nucleotide sequence ID" value="NM_001005375.3"/>
</dbReference>
<dbReference type="RefSeq" id="NP_065153.1">
    <molecule id="Q86SG3-2"/>
    <property type="nucleotide sequence ID" value="NM_020420.4"/>
</dbReference>
<dbReference type="BioGRID" id="121396">
    <property type="interactions" value="1"/>
</dbReference>
<dbReference type="FunCoup" id="Q86SG3">
    <property type="interactions" value="2"/>
</dbReference>
<dbReference type="IntAct" id="Q86SG3">
    <property type="interactions" value="1"/>
</dbReference>
<dbReference type="MINT" id="Q86SG3"/>
<dbReference type="iPTMnet" id="Q86SG3"/>
<dbReference type="PhosphoSitePlus" id="Q86SG3"/>
<dbReference type="BioMuta" id="DAZ4"/>
<dbReference type="DMDM" id="44887840"/>
<dbReference type="MassIVE" id="Q86SG3"/>
<dbReference type="PeptideAtlas" id="Q86SG3"/>
<dbReference type="Antibodypedia" id="5164">
    <property type="antibodies" value="137 antibodies from 23 providers"/>
</dbReference>
<dbReference type="DNASU" id="57135"/>
<dbReference type="Ensembl" id="ENST00000449750.7">
    <molecule id="Q86SG3-2"/>
    <property type="protein sequence ID" value="ENSP00000389300.2"/>
    <property type="gene ID" value="ENSG00000205916.12"/>
</dbReference>
<dbReference type="Ensembl" id="ENST00000634662.1">
    <molecule id="Q86SG3-1"/>
    <property type="protein sequence ID" value="ENSP00000489430.1"/>
    <property type="gene ID" value="ENSG00000205916.12"/>
</dbReference>
<dbReference type="GeneID" id="57135"/>
<dbReference type="KEGG" id="hsa:57135"/>
<dbReference type="UCSC" id="uc065cvv.1">
    <molecule id="Q86SG3-1"/>
    <property type="organism name" value="human"/>
</dbReference>
<dbReference type="AGR" id="HGNC:15966"/>
<dbReference type="CTD" id="57135"/>
<dbReference type="DisGeNET" id="57135"/>
<dbReference type="GeneCards" id="DAZ4"/>
<dbReference type="HGNC" id="HGNC:15966">
    <property type="gene designation" value="DAZ4"/>
</dbReference>
<dbReference type="HPA" id="ENSG00000205916">
    <property type="expression patterns" value="Group enriched (stomach, testis)"/>
</dbReference>
<dbReference type="MalaCards" id="DAZ4"/>
<dbReference type="MIM" id="400003">
    <property type="type" value="gene"/>
</dbReference>
<dbReference type="MIM" id="400048">
    <property type="type" value="gene"/>
</dbReference>
<dbReference type="MIM" id="415000">
    <property type="type" value="phenotype"/>
</dbReference>
<dbReference type="neXtProt" id="NX_Q86SG3"/>
<dbReference type="OpenTargets" id="ENSG00000188120"/>
<dbReference type="OpenTargets" id="ENSG00000205916"/>
<dbReference type="Orphanet" id="1646">
    <property type="disease" value="Chromosome Y microdeletion syndrome"/>
</dbReference>
<dbReference type="PharmGKB" id="PA27152"/>
<dbReference type="VEuPathDB" id="HostDB:ENSG00000205916"/>
<dbReference type="GeneTree" id="ENSGT00530000063480"/>
<dbReference type="HOGENOM" id="CLU_022076_0_0_1"/>
<dbReference type="InParanoid" id="Q86SG3"/>
<dbReference type="PAN-GO" id="Q86SG3">
    <property type="GO annotations" value="5 GO annotations based on evolutionary models"/>
</dbReference>
<dbReference type="TreeFam" id="TF324396"/>
<dbReference type="PathwayCommons" id="Q86SG3"/>
<dbReference type="SignaLink" id="Q86SG3"/>
<dbReference type="BioGRID-ORCS" id="57135">
    <property type="hits" value="6 hits in 236 CRISPR screens"/>
</dbReference>
<dbReference type="ChiTaRS" id="DAZ4">
    <property type="organism name" value="human"/>
</dbReference>
<dbReference type="GenomeRNAi" id="57135"/>
<dbReference type="Pharos" id="Q86SG3">
    <property type="development level" value="Tbio"/>
</dbReference>
<dbReference type="PRO" id="PR:Q86SG3"/>
<dbReference type="Proteomes" id="UP000005640">
    <property type="component" value="Chromosome Y"/>
</dbReference>
<dbReference type="RNAct" id="Q86SG3">
    <property type="molecule type" value="protein"/>
</dbReference>
<dbReference type="Bgee" id="ENSG00000205916">
    <property type="expression patterns" value="Expressed in primordial germ cell in gonad and 11 other cell types or tissues"/>
</dbReference>
<dbReference type="ExpressionAtlas" id="Q86SG3">
    <property type="expression patterns" value="baseline"/>
</dbReference>
<dbReference type="GO" id="GO:0005737">
    <property type="term" value="C:cytoplasm"/>
    <property type="evidence" value="ECO:0000314"/>
    <property type="project" value="UniProtKB"/>
</dbReference>
<dbReference type="GO" id="GO:0005634">
    <property type="term" value="C:nucleus"/>
    <property type="evidence" value="ECO:0007669"/>
    <property type="project" value="UniProtKB-SubCell"/>
</dbReference>
<dbReference type="GO" id="GO:0032991">
    <property type="term" value="C:protein-containing complex"/>
    <property type="evidence" value="ECO:0000314"/>
    <property type="project" value="UniProtKB"/>
</dbReference>
<dbReference type="GO" id="GO:0003730">
    <property type="term" value="F:mRNA 3'-UTR binding"/>
    <property type="evidence" value="ECO:0000318"/>
    <property type="project" value="GO_Central"/>
</dbReference>
<dbReference type="GO" id="GO:0008494">
    <property type="term" value="F:translation activator activity"/>
    <property type="evidence" value="ECO:0000318"/>
    <property type="project" value="GO_Central"/>
</dbReference>
<dbReference type="GO" id="GO:0070935">
    <property type="term" value="P:3'-UTR-mediated mRNA stabilization"/>
    <property type="evidence" value="ECO:0000318"/>
    <property type="project" value="GO_Central"/>
</dbReference>
<dbReference type="GO" id="GO:0030154">
    <property type="term" value="P:cell differentiation"/>
    <property type="evidence" value="ECO:0007669"/>
    <property type="project" value="UniProtKB-KW"/>
</dbReference>
<dbReference type="GO" id="GO:0045948">
    <property type="term" value="P:positive regulation of translational initiation"/>
    <property type="evidence" value="ECO:0000318"/>
    <property type="project" value="GO_Central"/>
</dbReference>
<dbReference type="GO" id="GO:0007283">
    <property type="term" value="P:spermatogenesis"/>
    <property type="evidence" value="ECO:0007669"/>
    <property type="project" value="UniProtKB-KW"/>
</dbReference>
<dbReference type="CDD" id="cd12672">
    <property type="entry name" value="RRM_DAZL"/>
    <property type="match status" value="2"/>
</dbReference>
<dbReference type="FunFam" id="3.30.70.330:FF:000180">
    <property type="entry name" value="Deleted in azoospermia-like"/>
    <property type="match status" value="2"/>
</dbReference>
<dbReference type="Gene3D" id="3.30.70.330">
    <property type="match status" value="2"/>
</dbReference>
<dbReference type="InterPro" id="IPR043628">
    <property type="entry name" value="DAZ_dom"/>
</dbReference>
<dbReference type="InterPro" id="IPR037551">
    <property type="entry name" value="DAZ_RRM_vert"/>
</dbReference>
<dbReference type="InterPro" id="IPR012677">
    <property type="entry name" value="Nucleotide-bd_a/b_plait_sf"/>
</dbReference>
<dbReference type="InterPro" id="IPR035979">
    <property type="entry name" value="RBD_domain_sf"/>
</dbReference>
<dbReference type="InterPro" id="IPR000504">
    <property type="entry name" value="RRM_dom"/>
</dbReference>
<dbReference type="PANTHER" id="PTHR11176">
    <property type="entry name" value="BOULE-RELATED"/>
    <property type="match status" value="1"/>
</dbReference>
<dbReference type="PANTHER" id="PTHR11176:SF8">
    <property type="entry name" value="DELETED IN AZOOSPERMIA PROTEIN 1-RELATED"/>
    <property type="match status" value="1"/>
</dbReference>
<dbReference type="Pfam" id="PF18872">
    <property type="entry name" value="Daz"/>
    <property type="match status" value="9"/>
</dbReference>
<dbReference type="Pfam" id="PF00076">
    <property type="entry name" value="RRM_1"/>
    <property type="match status" value="2"/>
</dbReference>
<dbReference type="SMART" id="SM00360">
    <property type="entry name" value="RRM"/>
    <property type="match status" value="2"/>
</dbReference>
<dbReference type="SUPFAM" id="SSF54928">
    <property type="entry name" value="RNA-binding domain, RBD"/>
    <property type="match status" value="2"/>
</dbReference>
<dbReference type="PROSITE" id="PS51890">
    <property type="entry name" value="DAZ"/>
    <property type="match status" value="9"/>
</dbReference>
<dbReference type="PROSITE" id="PS50102">
    <property type="entry name" value="RRM"/>
    <property type="match status" value="2"/>
</dbReference>
<evidence type="ECO:0000255" key="1">
    <source>
        <dbReference type="PROSITE-ProRule" id="PRU00176"/>
    </source>
</evidence>
<evidence type="ECO:0000255" key="2">
    <source>
        <dbReference type="PROSITE-ProRule" id="PRU01238"/>
    </source>
</evidence>
<evidence type="ECO:0000256" key="3">
    <source>
        <dbReference type="SAM" id="MobiDB-lite"/>
    </source>
</evidence>
<evidence type="ECO:0000269" key="4">
    <source>
    </source>
</evidence>
<evidence type="ECO:0000269" key="5">
    <source>
    </source>
</evidence>
<evidence type="ECO:0000269" key="6">
    <source>
    </source>
</evidence>
<evidence type="ECO:0000269" key="7">
    <source>
    </source>
</evidence>
<evidence type="ECO:0000269" key="8">
    <source>
    </source>
</evidence>
<evidence type="ECO:0000269" key="9">
    <source>
    </source>
</evidence>
<evidence type="ECO:0000269" key="10">
    <source>
    </source>
</evidence>
<evidence type="ECO:0000269" key="11">
    <source>
    </source>
</evidence>
<evidence type="ECO:0000269" key="12">
    <source>
    </source>
</evidence>
<evidence type="ECO:0000269" key="13">
    <source>
    </source>
</evidence>
<evidence type="ECO:0000269" key="14">
    <source>
    </source>
</evidence>
<evidence type="ECO:0000303" key="15">
    <source>
    </source>
</evidence>
<evidence type="ECO:0000305" key="16"/>
<evidence type="ECO:0000305" key="17">
    <source>
    </source>
</evidence>
<gene>
    <name type="primary">DAZ4</name>
</gene>
<reference key="1">
    <citation type="journal article" date="2000" name="Genomics">
        <title>Four DAZ genes in two clusters found in the AZFc region of the human Y chromosome.</title>
        <authorList>
            <person name="Saxena R."/>
            <person name="de Vries J.W.A."/>
            <person name="Repping S."/>
            <person name="Alagappan R.K."/>
            <person name="Skaletsky H."/>
            <person name="Brown L.G."/>
            <person name="Ma P."/>
            <person name="Chen E."/>
            <person name="Hoovers J.M.N."/>
            <person name="Page D.C."/>
        </authorList>
    </citation>
    <scope>NUCLEOTIDE SEQUENCE [MRNA] (ISOFORM 1)</scope>
    <scope>GENE STRUCTURE</scope>
    <scope>GENE NOMENCLATURE</scope>
    <scope>TISSUE SPECIFICITY</scope>
    <source>
        <tissue>Testis</tissue>
    </source>
</reference>
<reference key="2">
    <citation type="journal article" date="2003" name="Nature">
        <title>The male-specific region of the human Y chromosome is a mosaic of discrete sequence classes.</title>
        <authorList>
            <person name="Skaletsky H."/>
            <person name="Kuroda-Kawaguchi T."/>
            <person name="Minx P.J."/>
            <person name="Cordum H.S."/>
            <person name="Hillier L.W."/>
            <person name="Brown L.G."/>
            <person name="Repping S."/>
            <person name="Pyntikova T."/>
            <person name="Ali J."/>
            <person name="Bieri T."/>
            <person name="Chinwalla A."/>
            <person name="Delehaunty A."/>
            <person name="Delehaunty K."/>
            <person name="Du H."/>
            <person name="Fewell G."/>
            <person name="Fulton L."/>
            <person name="Fulton R."/>
            <person name="Graves T.A."/>
            <person name="Hou S.-F."/>
            <person name="Latrielle P."/>
            <person name="Leonard S."/>
            <person name="Mardis E."/>
            <person name="Maupin R."/>
            <person name="McPherson J."/>
            <person name="Miner T."/>
            <person name="Nash W."/>
            <person name="Nguyen C."/>
            <person name="Ozersky P."/>
            <person name="Pepin K."/>
            <person name="Rock S."/>
            <person name="Rohlfing T."/>
            <person name="Scott K."/>
            <person name="Schultz B."/>
            <person name="Strong C."/>
            <person name="Tin-Wollam A."/>
            <person name="Yang S.-P."/>
            <person name="Waterston R.H."/>
            <person name="Wilson R.K."/>
            <person name="Rozen S."/>
            <person name="Page D.C."/>
        </authorList>
    </citation>
    <scope>NUCLEOTIDE SEQUENCE [LARGE SCALE GENOMIC DNA]</scope>
</reference>
<reference key="3">
    <citation type="journal article" date="2004" name="Genome Res.">
        <title>The status, quality, and expansion of the NIH full-length cDNA project: the Mammalian Gene Collection (MGC).</title>
        <authorList>
            <consortium name="The MGC Project Team"/>
        </authorList>
    </citation>
    <scope>NUCLEOTIDE SEQUENCE [LARGE SCALE MRNA] (ISOFORM 2)</scope>
    <source>
        <tissue>Testis</tissue>
    </source>
</reference>
<reference key="4">
    <citation type="journal article" date="2000" name="Genomics">
        <title>Identification of two novel proteins that interact with germ-cell-specific RNA-binding proteins DAZ and DAZL1.</title>
        <authorList>
            <person name="Tsui S."/>
            <person name="Dai T."/>
            <person name="Roettger S."/>
            <person name="Schempp W."/>
            <person name="Salido E.C."/>
            <person name="Yen P.H."/>
        </authorList>
    </citation>
    <scope>INTERACTION WITH DAZAP1 AND DAZAP2</scope>
</reference>
<reference key="5">
    <citation type="journal article" date="2000" name="Biol. Reprod.">
        <title>DAZ family proteins exist throughout male germ cell development and transit from nucleus to cytoplasm at meiosis in humans and mice.</title>
        <authorList>
            <person name="Reijo R.A."/>
            <person name="Dorfman D.M."/>
            <person name="Slee R."/>
            <person name="Renshaw A.A."/>
            <person name="Loughlin K.R."/>
            <person name="Cooke H."/>
            <person name="Page D.C."/>
        </authorList>
    </citation>
    <scope>SUBCELLULAR LOCATION</scope>
</reference>
<reference key="6">
    <citation type="journal article" date="2000" name="Gene">
        <title>In vivo and in vitro analysis of homodimerisation activity of the mouse Dazl1 protein.</title>
        <authorList>
            <person name="Ruggiu M."/>
            <person name="Cooke H.J."/>
        </authorList>
    </citation>
    <scope>INTERACTION WITH DAZL</scope>
</reference>
<reference key="7">
    <citation type="journal article" date="2001" name="Proc. Natl. Acad. Sci. U.S.A.">
        <title>A gene family required for human germ cell development evolved from an ancient meiotic gene conserved in metazoans.</title>
        <authorList>
            <person name="Xu E.Y."/>
            <person name="Moore F.L."/>
            <person name="Reijo Pera R.A."/>
        </authorList>
    </citation>
    <scope>INTERACTION WITH BOLL</scope>
</reference>
<reference key="8">
    <citation type="journal article" date="2003" name="Proc. Natl. Acad. Sci. U.S.A.">
        <title>Human Pumilio-2 is expressed in embryonic stem cells and germ cells and interacts with DAZ (Deleted in AZoospermia) and DAZ-like proteins.</title>
        <authorList>
            <person name="Moore F.L."/>
            <person name="Jaruzelska J."/>
            <person name="Fox M.S."/>
            <person name="Urano J."/>
            <person name="Firpo M.T."/>
            <person name="Turek P.J."/>
            <person name="Dorfman D.M."/>
            <person name="Reijo Pera R.A."/>
        </authorList>
    </citation>
    <scope>INTERACTION WITH PUM2; DZIP1 AND DZIP3</scope>
</reference>
<reference key="9">
    <citation type="journal article" date="2003" name="APMIS">
        <title>Polymorphic DAZ gene family in polymorphic structure of AZFc locus: artwork or functional for human spermatogenesis?</title>
        <authorList>
            <person name="Vogt P.H."/>
            <person name="Fernandes S."/>
        </authorList>
    </citation>
    <scope>REVIEW</scope>
</reference>
<reference key="10">
    <citation type="journal article" date="2000" name="J. Clin. Endocrinol. Metab.">
        <title>Male infertility caused by a de novo partial deletion of the DAZ cluster on the Y chromosome.</title>
        <authorList>
            <person name="Moro E."/>
            <person name="Ferlin A."/>
            <person name="Yen P.H."/>
            <person name="Franchi P.G."/>
            <person name="Palka G."/>
            <person name="Foresta C."/>
        </authorList>
    </citation>
    <scope>INVOLVEMENT IN SPGFY2</scope>
</reference>
<reference key="11">
    <citation type="journal article" date="2003" name="Fertil. Steril.">
        <title>Partial DAZ deletions in a family with five infertile brothers.</title>
        <authorList>
            <person name="Gianotten J."/>
            <person name="Hoffer M.J.V."/>
            <person name="De Vries J.W.A."/>
            <person name="Leschot N.J."/>
            <person name="Gerris J."/>
            <person name="van der Veen F."/>
        </authorList>
    </citation>
    <scope>INVOLVEMENT IN SPGFY2</scope>
</reference>
<reference key="12">
    <citation type="journal article" date="2005" name="Fertil. Steril.">
        <title>Copy number of DAZ genes in infertile men.</title>
        <authorList>
            <person name="Writzl K."/>
            <person name="Zorn B."/>
            <person name="Peterlin B."/>
        </authorList>
    </citation>
    <scope>GENE DUPLICATION</scope>
</reference>
<reference key="13">
    <citation type="journal article" date="2008" name="Hum. Reprod.">
        <title>Restricted expression of the human DAZ protein in premeiotic germ cells.</title>
        <authorList>
            <person name="Huang W.J."/>
            <person name="Lin Y.W."/>
            <person name="Hsiao K.N."/>
            <person name="Eilber K.S."/>
            <person name="Salido E.C."/>
            <person name="Yen P.H."/>
        </authorList>
    </citation>
    <scope>TISSUE SPECIFICITY</scope>
</reference>
<reference key="14">
    <citation type="journal article" date="2009" name="Hum. Reprod.">
        <title>Polymorphic expression of DAZ proteins in the human testis.</title>
        <authorList>
            <person name="Kim B."/>
            <person name="Lee Y."/>
            <person name="Kim Y."/>
            <person name="Lee K.H."/>
            <person name="Chun S."/>
            <person name="Rhee K."/>
            <person name="Seo J.T."/>
            <person name="Kim S.W."/>
            <person name="Paick J.S."/>
        </authorList>
    </citation>
    <scope>TISSUE SPECIFICITY</scope>
</reference>
<reference key="15">
    <citation type="journal article" date="2019" name="J. Proteome Res.">
        <title>Cell Type-Specific Expression of Testis Elevated Genes Based on Transcriptomics and Antibody-Based Proteomics.</title>
        <authorList>
            <person name="Pineau C."/>
            <person name="Hikmet F."/>
            <person name="Zhang C."/>
            <person name="Oksvold P."/>
            <person name="Chen S."/>
            <person name="Fagerberg L."/>
            <person name="Uhlen M."/>
            <person name="Lindskog C."/>
        </authorList>
    </citation>
    <scope>SUBCELLULAR LOCATION</scope>
</reference>
<proteinExistence type="evidence at protein level"/>
<comment type="function">
    <text>RNA-binding protein that plays an essential role in spermatogenesis. May act by binding to the 3'-UTR of mRNAs and regulating their translation.</text>
</comment>
<comment type="subunit">
    <text evidence="4 5 9 10">Forms a heterodimer with BOLL and DAZL. Interacts with PUM2, DAZAP1, DAZAP2, DZIP1 and DZIP3.</text>
</comment>
<comment type="subcellular location">
    <subcellularLocation>
        <location evidence="7 14">Cytoplasm</location>
    </subcellularLocation>
    <subcellularLocation>
        <location evidence="7">Nucleus</location>
    </subcellularLocation>
    <text>Predominantly cytoplasmic. Nuclear at some stages of spermatozoide development. Localizes both to the nuclei and cytoplasm of spermatozoide differentiation. Nuclear in fetal gonocytes and in spermatogonial nuclei. It then relocates to the cytoplasm during male meiosis.</text>
</comment>
<comment type="alternative products">
    <event type="alternative splicing"/>
    <isoform>
        <id>Q86SG3-1</id>
        <name>1</name>
        <sequence type="displayed"/>
    </isoform>
    <isoform>
        <id>Q86SG3-2</id>
        <name>2</name>
        <sequence type="described" ref="VSP_009454 VSP_009455 VSP_009456"/>
    </isoform>
</comment>
<comment type="tissue specificity">
    <text evidence="6 12 13">Testis-specific. Expression restricted to premeiotic germ cells, particularly in spermatogonia (at protein level).</text>
</comment>
<comment type="domain">
    <text>The DAZ domains are essential and mediate the interaction with DAZAP1 and DAZAP2.</text>
</comment>
<comment type="polymorphism">
    <text evidence="17">The number as well as the precise structure of the DAZ proteins probably differs within the population.</text>
</comment>
<comment type="disease" evidence="8 11">
    <disease id="DI-02062">
        <name>Spermatogenic failure Y-linked 2</name>
        <acronym>SPGFY2</acronym>
        <description>A disorder resulting in the absence (azoospermia) or reduction (oligozoospermia) of sperm in the semen, leading to male infertility.</description>
        <dbReference type="MIM" id="415000"/>
    </disease>
    <text>The disease may be caused by variants affecting the gene represented in this entry. AZFc deletions in the Yq11.23 region including the DAZ genes are the most common known genetic cause of human male infertility.</text>
</comment>
<comment type="miscellaneous">
    <text>DAZ genes are prone to deletions but also to duplications. In a population of infertile men, DAZ genes deletions are associated with oligozoospermia but an increased number of DAZ genes is not a significant risk factor for spermatogenic failure.</text>
</comment>
<comment type="miscellaneous">
    <text>The DAZ proteins (DAZ, DAZ2, DAZ4 and DAZ4) are all encoded by a strongly repeated region of the Y chromosome, in two clusters each comprising an inverted pair of DAZ genes. They are very similar, which gives their indidual characterization difficult. Thus, most experiments do not discriminate between the different members. One can therefore suppose that reported interactions with a DAZ protein involve all the 4 proteins.</text>
</comment>
<comment type="similarity">
    <text evidence="2">Belongs to the RRM DAZ family.</text>
</comment>
<sequence>MSAANPETPNSTISREASTQSSSAAASQGWVLPEGKIVPNTVFVGGIDARMDETEIGSCFGRYGSVKEVKIITNRTGVSKGYGFVSFVNDVDVQKIVGSQIHFHGKKLKLGPAIRKQKLCARHVQPRPLVVNPPPPPQFQNVWRNPNTETYLQPQITPNPVTQHVQSAANPETPNSTISREASTQSSSAAASQGWVLPEGKIVPNTVFVGGIDARMDETEIGSCFGRYGSVKEVKIITNRTGVSKGYGFVSFVNDVDVQKIVGSQIHFHGKKLKLGPAIRKQKLCARHVQPRPLVVNPPPPPQFQNVWRNPNTETYLQPQITPNPVTQHVQAYSAYPHSPGQVITGCQLLVYNYQEYPTYPDSAFQVTTGYQLPVYNYQPFPAYPRSPFQVTAGYQLPVYNYQAFPAYPNSPFQVATGYQFPVYNYQPFPAYPSSPFQVTAGYQLPVYNYQAFPAYPNSPFQVATGYQFPVYNYQAFPAYPNSPVQVTTGYQLPVYNYQAFPAYPSSPFQVTTGYQLPVYNYQAFPAYPNSAVQVTTGYQFHVYNYQMPPQCPVGEQRRNLWTEAYKWWYLVCLIQRRD</sequence>
<protein>
    <recommendedName>
        <fullName>Deleted in azoospermia protein 4</fullName>
    </recommendedName>
</protein>
<organism>
    <name type="scientific">Homo sapiens</name>
    <name type="common">Human</name>
    <dbReference type="NCBI Taxonomy" id="9606"/>
    <lineage>
        <taxon>Eukaryota</taxon>
        <taxon>Metazoa</taxon>
        <taxon>Chordata</taxon>
        <taxon>Craniata</taxon>
        <taxon>Vertebrata</taxon>
        <taxon>Euteleostomi</taxon>
        <taxon>Mammalia</taxon>
        <taxon>Eutheria</taxon>
        <taxon>Euarchontoglires</taxon>
        <taxon>Primates</taxon>
        <taxon>Haplorrhini</taxon>
        <taxon>Catarrhini</taxon>
        <taxon>Hominidae</taxon>
        <taxon>Homo</taxon>
    </lineage>
</organism>